<accession>B1JUS5</accession>
<sequence>MQLLTIGINHHTAPVALRERVAFPLEQIKPALVTFKNVFLGPQAPNTPEAAILSTCNRTELYCATDDRAAREGAVRWLSEYHRIPVDELAPHVYALPQSEAVRHAFRVASGLDSMVLGETQILGQMKDAVRTATEAGALGTYLNQLFQRTFAVAKEVRGTTEIGTQSVSMAAAAVRLAQRIFEKVSDQRVLFIGAGEMIELCATHFAAQGPRELVVANRTAERGQRLAERFNGRAMPLADLPTRMHEFDIIVSCTASTLPIIGLGAVERAVKARRHRPIFMVDLAVPRDIEPEVGKLKDVFLYTVDDLGAIVREGNASRQAAVAQAEAIIETRVQNFMQWLDTRSVVPVIRHMHTQADALRRAEVEKAQKLLARGDDPAAVLEALSQALTNKLIHGPTSALNRVNGADRDSLIDLMRGFYQHAPRSNDQSGH</sequence>
<comment type="function">
    <text evidence="1">Catalyzes the NADPH-dependent reduction of glutamyl-tRNA(Glu) to glutamate 1-semialdehyde (GSA).</text>
</comment>
<comment type="catalytic activity">
    <reaction evidence="1">
        <text>(S)-4-amino-5-oxopentanoate + tRNA(Glu) + NADP(+) = L-glutamyl-tRNA(Glu) + NADPH + H(+)</text>
        <dbReference type="Rhea" id="RHEA:12344"/>
        <dbReference type="Rhea" id="RHEA-COMP:9663"/>
        <dbReference type="Rhea" id="RHEA-COMP:9680"/>
        <dbReference type="ChEBI" id="CHEBI:15378"/>
        <dbReference type="ChEBI" id="CHEBI:57501"/>
        <dbReference type="ChEBI" id="CHEBI:57783"/>
        <dbReference type="ChEBI" id="CHEBI:58349"/>
        <dbReference type="ChEBI" id="CHEBI:78442"/>
        <dbReference type="ChEBI" id="CHEBI:78520"/>
        <dbReference type="EC" id="1.2.1.70"/>
    </reaction>
</comment>
<comment type="pathway">
    <text evidence="1">Porphyrin-containing compound metabolism; protoporphyrin-IX biosynthesis; 5-aminolevulinate from L-glutamyl-tRNA(Glu): step 1/2.</text>
</comment>
<comment type="subunit">
    <text evidence="1">Homodimer.</text>
</comment>
<comment type="domain">
    <text evidence="1">Possesses an unusual extended V-shaped dimeric structure with each monomer consisting of three distinct domains arranged along a curved 'spinal' alpha-helix. The N-terminal catalytic domain specifically recognizes the glutamate moiety of the substrate. The second domain is the NADPH-binding domain, and the third C-terminal domain is responsible for dimerization.</text>
</comment>
<comment type="miscellaneous">
    <text evidence="1">During catalysis, the active site Cys acts as a nucleophile attacking the alpha-carbonyl group of tRNA-bound glutamate with the formation of a thioester intermediate between enzyme and glutamate, and the concomitant release of tRNA(Glu). The thioester intermediate is finally reduced by direct hydride transfer from NADPH, to form the product GSA.</text>
</comment>
<comment type="similarity">
    <text evidence="1">Belongs to the glutamyl-tRNA reductase family.</text>
</comment>
<keyword id="KW-0521">NADP</keyword>
<keyword id="KW-0560">Oxidoreductase</keyword>
<keyword id="KW-0627">Porphyrin biosynthesis</keyword>
<reference key="1">
    <citation type="submission" date="2008-02" db="EMBL/GenBank/DDBJ databases">
        <title>Complete sequence of chromosome 1 of Burkholderia cenocepacia MC0-3.</title>
        <authorList>
            <person name="Copeland A."/>
            <person name="Lucas S."/>
            <person name="Lapidus A."/>
            <person name="Barry K."/>
            <person name="Bruce D."/>
            <person name="Goodwin L."/>
            <person name="Glavina del Rio T."/>
            <person name="Dalin E."/>
            <person name="Tice H."/>
            <person name="Pitluck S."/>
            <person name="Chain P."/>
            <person name="Malfatti S."/>
            <person name="Shin M."/>
            <person name="Vergez L."/>
            <person name="Schmutz J."/>
            <person name="Larimer F."/>
            <person name="Land M."/>
            <person name="Hauser L."/>
            <person name="Kyrpides N."/>
            <person name="Mikhailova N."/>
            <person name="Tiedje J."/>
            <person name="Richardson P."/>
        </authorList>
    </citation>
    <scope>NUCLEOTIDE SEQUENCE [LARGE SCALE GENOMIC DNA]</scope>
    <source>
        <strain>MC0-3</strain>
    </source>
</reference>
<protein>
    <recommendedName>
        <fullName evidence="1">Glutamyl-tRNA reductase</fullName>
        <shortName evidence="1">GluTR</shortName>
        <ecNumber evidence="1">1.2.1.70</ecNumber>
    </recommendedName>
</protein>
<evidence type="ECO:0000255" key="1">
    <source>
        <dbReference type="HAMAP-Rule" id="MF_00087"/>
    </source>
</evidence>
<organism>
    <name type="scientific">Burkholderia orbicola (strain MC0-3)</name>
    <dbReference type="NCBI Taxonomy" id="406425"/>
    <lineage>
        <taxon>Bacteria</taxon>
        <taxon>Pseudomonadati</taxon>
        <taxon>Pseudomonadota</taxon>
        <taxon>Betaproteobacteria</taxon>
        <taxon>Burkholderiales</taxon>
        <taxon>Burkholderiaceae</taxon>
        <taxon>Burkholderia</taxon>
        <taxon>Burkholderia cepacia complex</taxon>
        <taxon>Burkholderia orbicola</taxon>
    </lineage>
</organism>
<proteinExistence type="inferred from homology"/>
<dbReference type="EC" id="1.2.1.70" evidence="1"/>
<dbReference type="EMBL" id="CP000958">
    <property type="protein sequence ID" value="ACA89661.1"/>
    <property type="molecule type" value="Genomic_DNA"/>
</dbReference>
<dbReference type="RefSeq" id="WP_006477063.1">
    <property type="nucleotide sequence ID" value="NC_010508.1"/>
</dbReference>
<dbReference type="SMR" id="B1JUS5"/>
<dbReference type="GeneID" id="83047279"/>
<dbReference type="KEGG" id="bcm:Bcenmc03_0483"/>
<dbReference type="HOGENOM" id="CLU_035113_2_2_4"/>
<dbReference type="UniPathway" id="UPA00251">
    <property type="reaction ID" value="UER00316"/>
</dbReference>
<dbReference type="Proteomes" id="UP000002169">
    <property type="component" value="Chromosome 1"/>
</dbReference>
<dbReference type="GO" id="GO:0008883">
    <property type="term" value="F:glutamyl-tRNA reductase activity"/>
    <property type="evidence" value="ECO:0007669"/>
    <property type="project" value="UniProtKB-UniRule"/>
</dbReference>
<dbReference type="GO" id="GO:0050661">
    <property type="term" value="F:NADP binding"/>
    <property type="evidence" value="ECO:0007669"/>
    <property type="project" value="InterPro"/>
</dbReference>
<dbReference type="GO" id="GO:0019353">
    <property type="term" value="P:protoporphyrinogen IX biosynthetic process from glutamate"/>
    <property type="evidence" value="ECO:0007669"/>
    <property type="project" value="TreeGrafter"/>
</dbReference>
<dbReference type="CDD" id="cd05213">
    <property type="entry name" value="NAD_bind_Glutamyl_tRNA_reduct"/>
    <property type="match status" value="1"/>
</dbReference>
<dbReference type="FunFam" id="3.30.460.30:FF:000001">
    <property type="entry name" value="Glutamyl-tRNA reductase"/>
    <property type="match status" value="1"/>
</dbReference>
<dbReference type="FunFam" id="3.40.50.720:FF:000031">
    <property type="entry name" value="Glutamyl-tRNA reductase"/>
    <property type="match status" value="1"/>
</dbReference>
<dbReference type="Gene3D" id="3.30.460.30">
    <property type="entry name" value="Glutamyl-tRNA reductase, N-terminal domain"/>
    <property type="match status" value="1"/>
</dbReference>
<dbReference type="Gene3D" id="3.40.50.720">
    <property type="entry name" value="NAD(P)-binding Rossmann-like Domain"/>
    <property type="match status" value="1"/>
</dbReference>
<dbReference type="HAMAP" id="MF_00087">
    <property type="entry name" value="Glu_tRNA_reductase"/>
    <property type="match status" value="1"/>
</dbReference>
<dbReference type="InterPro" id="IPR000343">
    <property type="entry name" value="4pyrrol_synth_GluRdtase"/>
</dbReference>
<dbReference type="InterPro" id="IPR015896">
    <property type="entry name" value="4pyrrol_synth_GluRdtase_dimer"/>
</dbReference>
<dbReference type="InterPro" id="IPR015895">
    <property type="entry name" value="4pyrrol_synth_GluRdtase_N"/>
</dbReference>
<dbReference type="InterPro" id="IPR018214">
    <property type="entry name" value="GluRdtase_CS"/>
</dbReference>
<dbReference type="InterPro" id="IPR036453">
    <property type="entry name" value="GluRdtase_dimer_dom_sf"/>
</dbReference>
<dbReference type="InterPro" id="IPR036343">
    <property type="entry name" value="GluRdtase_N_sf"/>
</dbReference>
<dbReference type="InterPro" id="IPR036291">
    <property type="entry name" value="NAD(P)-bd_dom_sf"/>
</dbReference>
<dbReference type="InterPro" id="IPR006151">
    <property type="entry name" value="Shikm_DH/Glu-tRNA_Rdtase"/>
</dbReference>
<dbReference type="NCBIfam" id="TIGR01035">
    <property type="entry name" value="hemA"/>
    <property type="match status" value="1"/>
</dbReference>
<dbReference type="PANTHER" id="PTHR43013">
    <property type="entry name" value="GLUTAMYL-TRNA REDUCTASE"/>
    <property type="match status" value="1"/>
</dbReference>
<dbReference type="PANTHER" id="PTHR43013:SF1">
    <property type="entry name" value="GLUTAMYL-TRNA REDUCTASE"/>
    <property type="match status" value="1"/>
</dbReference>
<dbReference type="Pfam" id="PF00745">
    <property type="entry name" value="GlutR_dimer"/>
    <property type="match status" value="1"/>
</dbReference>
<dbReference type="Pfam" id="PF05201">
    <property type="entry name" value="GlutR_N"/>
    <property type="match status" value="1"/>
</dbReference>
<dbReference type="Pfam" id="PF01488">
    <property type="entry name" value="Shikimate_DH"/>
    <property type="match status" value="1"/>
</dbReference>
<dbReference type="PIRSF" id="PIRSF000445">
    <property type="entry name" value="4pyrrol_synth_GluRdtase"/>
    <property type="match status" value="1"/>
</dbReference>
<dbReference type="SUPFAM" id="SSF69742">
    <property type="entry name" value="Glutamyl tRNA-reductase catalytic, N-terminal domain"/>
    <property type="match status" value="1"/>
</dbReference>
<dbReference type="SUPFAM" id="SSF69075">
    <property type="entry name" value="Glutamyl tRNA-reductase dimerization domain"/>
    <property type="match status" value="1"/>
</dbReference>
<dbReference type="SUPFAM" id="SSF51735">
    <property type="entry name" value="NAD(P)-binding Rossmann-fold domains"/>
    <property type="match status" value="1"/>
</dbReference>
<dbReference type="PROSITE" id="PS00747">
    <property type="entry name" value="GLUTR"/>
    <property type="match status" value="1"/>
</dbReference>
<gene>
    <name evidence="1" type="primary">hemA</name>
    <name type="ordered locus">Bcenmc03_0483</name>
</gene>
<feature type="chain" id="PRO_1000093116" description="Glutamyl-tRNA reductase">
    <location>
        <begin position="1"/>
        <end position="432"/>
    </location>
</feature>
<feature type="active site" description="Nucleophile" evidence="1">
    <location>
        <position position="56"/>
    </location>
</feature>
<feature type="binding site" evidence="1">
    <location>
        <begin position="55"/>
        <end position="58"/>
    </location>
    <ligand>
        <name>substrate</name>
    </ligand>
</feature>
<feature type="binding site" evidence="1">
    <location>
        <position position="114"/>
    </location>
    <ligand>
        <name>substrate</name>
    </ligand>
</feature>
<feature type="binding site" evidence="1">
    <location>
        <begin position="119"/>
        <end position="121"/>
    </location>
    <ligand>
        <name>substrate</name>
    </ligand>
</feature>
<feature type="binding site" evidence="1">
    <location>
        <position position="125"/>
    </location>
    <ligand>
        <name>substrate</name>
    </ligand>
</feature>
<feature type="binding site" evidence="1">
    <location>
        <begin position="194"/>
        <end position="199"/>
    </location>
    <ligand>
        <name>NADP(+)</name>
        <dbReference type="ChEBI" id="CHEBI:58349"/>
    </ligand>
</feature>
<feature type="site" description="Important for activity" evidence="1">
    <location>
        <position position="104"/>
    </location>
</feature>
<name>HEM1_BURO0</name>